<reference key="1">
    <citation type="journal article" date="1990" name="EMBO J.">
        <title>Protein secretion in Gram-negative bacteria: transport across the outer membrane involves common mechanisms in different bacteria.</title>
        <authorList>
            <person name="Filloux A."/>
            <person name="Bally M."/>
            <person name="Ball G."/>
            <person name="Akrim M."/>
            <person name="Tommassen J."/>
            <person name="Lazdunski A."/>
        </authorList>
    </citation>
    <scope>NUCLEOTIDE SEQUENCE [GENOMIC DNA]</scope>
</reference>
<reference key="2">
    <citation type="journal article" date="2000" name="Nature">
        <title>Complete genome sequence of Pseudomonas aeruginosa PAO1, an opportunistic pathogen.</title>
        <authorList>
            <person name="Stover C.K."/>
            <person name="Pham X.-Q.T."/>
            <person name="Erwin A.L."/>
            <person name="Mizoguchi S.D."/>
            <person name="Warrener P."/>
            <person name="Hickey M.J."/>
            <person name="Brinkman F.S.L."/>
            <person name="Hufnagle W.O."/>
            <person name="Kowalik D.J."/>
            <person name="Lagrou M."/>
            <person name="Garber R.L."/>
            <person name="Goltry L."/>
            <person name="Tolentino E."/>
            <person name="Westbrock-Wadman S."/>
            <person name="Yuan Y."/>
            <person name="Brody L.L."/>
            <person name="Coulter S.N."/>
            <person name="Folger K.R."/>
            <person name="Kas A."/>
            <person name="Larbig K."/>
            <person name="Lim R.M."/>
            <person name="Smith K.A."/>
            <person name="Spencer D.H."/>
            <person name="Wong G.K.-S."/>
            <person name="Wu Z."/>
            <person name="Paulsen I.T."/>
            <person name="Reizer J."/>
            <person name="Saier M.H. Jr."/>
            <person name="Hancock R.E.W."/>
            <person name="Lory S."/>
            <person name="Olson M.V."/>
        </authorList>
    </citation>
    <scope>NUCLEOTIDE SEQUENCE [LARGE SCALE GENOMIC DNA]</scope>
    <source>
        <strain>ATCC 15692 / DSM 22644 / CIP 104116 / JCM 14847 / LMG 12228 / 1C / PRS 101 / PAO1</strain>
    </source>
</reference>
<reference key="3">
    <citation type="journal article" date="1996" name="J. Bacteriol.">
        <title>Membrane topology of three Xcp proteins involved in exoprotein transport by Pseudomonas aeruginosa.</title>
        <authorList>
            <person name="Bleves S."/>
            <person name="Lazdunski A."/>
            <person name="Filloux A."/>
        </authorList>
    </citation>
    <scope>TOPOLOGY</scope>
    <scope>SUBCELLULAR LOCATION</scope>
</reference>
<reference key="4">
    <citation type="journal article" date="1998" name="Microbiology">
        <title>Mutual stabilization of the XcpZ and XcpY components of the secretory apparatus in Pseudomonas aeruginosa.</title>
        <authorList>
            <person name="Michel G."/>
            <person name="Bleves S."/>
            <person name="Ball G."/>
            <person name="Lazdunski A."/>
            <person name="Filloux A."/>
        </authorList>
    </citation>
    <scope>DISRUPTION PHENOTYPE</scope>
    <scope>INTERACTION WITH XCPZ</scope>
    <scope>FUNCTION</scope>
    <source>
        <strain>ATCC 15692 / DSM 22644 / CIP 104116 / JCM 14847 / LMG 12228 / 1C / PRS 101 / PAO1</strain>
    </source>
</reference>
<reference key="5">
    <citation type="journal article" date="2002" name="J. Bacteriol.">
        <title>Identification of XcpZ domains required for assembly of the secreton of Pseudomonas aeruginosa.</title>
        <authorList>
            <person name="Robert V."/>
            <person name="Hayes F."/>
            <person name="Lazdunski A."/>
            <person name="Michel G.P."/>
        </authorList>
    </citation>
    <scope>FUNCTION</scope>
    <scope>INTERACTION WITH XCPZ</scope>
</reference>
<reference key="6">
    <citation type="journal article" date="2005" name="FEMS Microbiol. Lett.">
        <title>Subcomplexes from the Xcp secretion system of Pseudomonas aeruginosa.</title>
        <authorList>
            <person name="Robert V."/>
            <person name="Filloux A."/>
            <person name="Michel G.P."/>
        </authorList>
    </citation>
    <scope>INTERACTION WITH XCPZ; XCPR AND XCPS</scope>
</reference>
<reference key="7">
    <citation type="journal article" date="2018" name="J. Biol. Chem.">
        <title>Direct interactions between the secreted effector and the T2SS components GspL and GspM reveal a new effector-sensing step during type 2 secretion.</title>
        <authorList>
            <person name="Michel-Souzy S."/>
            <person name="Douzi B."/>
            <person name="Cadoret F."/>
            <person name="Raynaud C."/>
            <person name="Quinton L."/>
            <person name="Ball G."/>
            <person name="Voulhoux R."/>
        </authorList>
    </citation>
    <scope>FUNCTION</scope>
    <scope>INTERACTION WITH XCPZ</scope>
</reference>
<reference key="8">
    <citation type="journal article" date="2018" name="Sci. Rep.">
        <title>Structure and oligomerization of the periplasmic domain of GspL from the type II secretion system of Pseudomonas aeruginosa.</title>
        <authorList>
            <person name="Fulara A."/>
            <person name="Vandenberghe I."/>
            <person name="Read R.J."/>
            <person name="Devreese B."/>
            <person name="Savvides S.N."/>
        </authorList>
    </citation>
    <scope>X-RAY CRYSTALLOGRAPHY (2.00 ANGSTROMS) OF 303-382</scope>
    <scope>SUBUNIT</scope>
</reference>
<evidence type="ECO:0000250" key="1">
    <source>
        <dbReference type="UniProtKB" id="Q00514"/>
    </source>
</evidence>
<evidence type="ECO:0000269" key="2">
    <source>
    </source>
</evidence>
<evidence type="ECO:0000269" key="3">
    <source>
    </source>
</evidence>
<evidence type="ECO:0000269" key="4">
    <source>
    </source>
</evidence>
<evidence type="ECO:0000269" key="5">
    <source>
    </source>
</evidence>
<evidence type="ECO:0000269" key="6">
    <source>
    </source>
</evidence>
<evidence type="ECO:0000269" key="7">
    <source>
    </source>
</evidence>
<evidence type="ECO:0000305" key="8"/>
<evidence type="ECO:0007829" key="9">
    <source>
        <dbReference type="PDB" id="6GHU"/>
    </source>
</evidence>
<protein>
    <recommendedName>
        <fullName>Type II secretion system protein L</fullName>
        <shortName>T2SS protein L</shortName>
    </recommendedName>
    <alternativeName>
        <fullName>General secretion pathway protein L</fullName>
    </alternativeName>
</protein>
<accession>P25060</accession>
<sequence length="382" mass="41319">MSGVSALFLPPASTAGADGELAVWWVQDGECRRAPFAQALAEIRAPWRLYLPVEAVTACAVNLPTQKARWLRQSLPFAVEEQLADDVEQMHLALGPALADGRHRVFAVQRTWLAAWLALAEGAGKAPASLHVDADCLPGEGSCLFWLEERWLLGGSGAVRLACGSEDWPVLRDSCPPPQRAFAAQEVAPLEGVEVQALAGNPHVWLSEQPLGTDLAQAEFAARQQSSQWRRWRPLLGLVGLWLVLQWGFTLVQAWQLQREGDRYAAQSAELYRQLFPEDRKLINLRAQFDQHLADSASSGGEGQLLGLLGQAATVIGGEPTVSVEQLDFSAARGDVALQVRAPGFDVLERLRSRLSESGLAVQLGSASRDGSTVSARLVIGG</sequence>
<feature type="chain" id="PRO_0000207318" description="Type II secretion system protein L">
    <location>
        <begin position="1"/>
        <end position="382"/>
    </location>
</feature>
<feature type="topological domain" description="Cytoplasmic" evidence="6">
    <location>
        <begin position="1"/>
        <end position="233"/>
    </location>
</feature>
<feature type="transmembrane region" description="Helical" evidence="6">
    <location>
        <begin position="234"/>
        <end position="254"/>
    </location>
</feature>
<feature type="topological domain" description="Periplasmic" evidence="6">
    <location>
        <begin position="255"/>
        <end position="382"/>
    </location>
</feature>
<feature type="sequence conflict" description="In Ref. 1; CAA39644." evidence="8" ref="1">
    <original>A</original>
    <variation>R</variation>
    <location>
        <position position="266"/>
    </location>
</feature>
<feature type="sequence conflict" description="In Ref. 1; CAA39644." evidence="8" ref="1">
    <original>D</original>
    <variation>A</variation>
    <location>
        <position position="370"/>
    </location>
</feature>
<feature type="helix" evidence="9">
    <location>
        <begin position="306"/>
        <end position="317"/>
    </location>
</feature>
<feature type="strand" evidence="9">
    <location>
        <begin position="323"/>
        <end position="330"/>
    </location>
</feature>
<feature type="turn" evidence="9">
    <location>
        <begin position="331"/>
        <end position="334"/>
    </location>
</feature>
<feature type="strand" evidence="9">
    <location>
        <begin position="335"/>
        <end position="344"/>
    </location>
</feature>
<feature type="helix" evidence="9">
    <location>
        <begin position="345"/>
        <end position="357"/>
    </location>
</feature>
<feature type="strand" evidence="9">
    <location>
        <begin position="362"/>
        <end position="364"/>
    </location>
</feature>
<feature type="strand" evidence="9">
    <location>
        <begin position="368"/>
        <end position="370"/>
    </location>
</feature>
<feature type="strand" evidence="9">
    <location>
        <begin position="373"/>
        <end position="380"/>
    </location>
</feature>
<proteinExistence type="evidence at protein level"/>
<organism>
    <name type="scientific">Pseudomonas aeruginosa (strain ATCC 15692 / DSM 22644 / CIP 104116 / JCM 14847 / LMG 12228 / 1C / PRS 101 / PAO1)</name>
    <dbReference type="NCBI Taxonomy" id="208964"/>
    <lineage>
        <taxon>Bacteria</taxon>
        <taxon>Pseudomonadati</taxon>
        <taxon>Pseudomonadota</taxon>
        <taxon>Gammaproteobacteria</taxon>
        <taxon>Pseudomonadales</taxon>
        <taxon>Pseudomonadaceae</taxon>
        <taxon>Pseudomonas</taxon>
    </lineage>
</organism>
<gene>
    <name type="primary">xcpY</name>
    <name type="ordered locus">PA3096</name>
</gene>
<dbReference type="EMBL" id="X56183">
    <property type="protein sequence ID" value="CAA39644.1"/>
    <property type="molecule type" value="Genomic_DNA"/>
</dbReference>
<dbReference type="EMBL" id="AE004091">
    <property type="protein sequence ID" value="AAG06484.1"/>
    <property type="molecule type" value="Genomic_DNA"/>
</dbReference>
<dbReference type="PIR" id="H83257">
    <property type="entry name" value="H83257"/>
</dbReference>
<dbReference type="PIR" id="S12355">
    <property type="entry name" value="S12355"/>
</dbReference>
<dbReference type="RefSeq" id="NP_251786.1">
    <property type="nucleotide sequence ID" value="NC_002516.2"/>
</dbReference>
<dbReference type="RefSeq" id="WP_003103522.1">
    <property type="nucleotide sequence ID" value="NZ_QZGE01000009.1"/>
</dbReference>
<dbReference type="PDB" id="5N7L">
    <property type="method" value="X-ray"/>
    <property type="resolution" value="2.50 A"/>
    <property type="chains" value="A=303-382"/>
</dbReference>
<dbReference type="PDB" id="6GHU">
    <property type="method" value="X-ray"/>
    <property type="resolution" value="2.00 A"/>
    <property type="chains" value="A/B=304-381"/>
</dbReference>
<dbReference type="PDBsum" id="5N7L"/>
<dbReference type="PDBsum" id="6GHU"/>
<dbReference type="SASBDB" id="P25060"/>
<dbReference type="SMR" id="P25060"/>
<dbReference type="FunCoup" id="P25060">
    <property type="interactions" value="136"/>
</dbReference>
<dbReference type="STRING" id="208964.PA3096"/>
<dbReference type="PaxDb" id="208964-PA3096"/>
<dbReference type="GeneID" id="882778"/>
<dbReference type="KEGG" id="pae:PA3096"/>
<dbReference type="PATRIC" id="fig|208964.12.peg.3248"/>
<dbReference type="PseudoCAP" id="PA3096"/>
<dbReference type="HOGENOM" id="CLU_041016_2_2_6"/>
<dbReference type="InParanoid" id="P25060"/>
<dbReference type="OrthoDB" id="7011844at2"/>
<dbReference type="BioCyc" id="PAER208964:G1FZ6-3152-MONOMER"/>
<dbReference type="Proteomes" id="UP000002438">
    <property type="component" value="Chromosome"/>
</dbReference>
<dbReference type="GO" id="GO:0009276">
    <property type="term" value="C:Gram-negative-bacterium-type cell wall"/>
    <property type="evidence" value="ECO:0007669"/>
    <property type="project" value="InterPro"/>
</dbReference>
<dbReference type="GO" id="GO:0005886">
    <property type="term" value="C:plasma membrane"/>
    <property type="evidence" value="ECO:0007669"/>
    <property type="project" value="UniProtKB-SubCell"/>
</dbReference>
<dbReference type="GO" id="GO:0015627">
    <property type="term" value="C:type II protein secretion system complex"/>
    <property type="evidence" value="ECO:0000314"/>
    <property type="project" value="PseudoCAP"/>
</dbReference>
<dbReference type="GO" id="GO:0015628">
    <property type="term" value="P:protein secretion by the type II secretion system"/>
    <property type="evidence" value="ECO:0000314"/>
    <property type="project" value="PseudoCAP"/>
</dbReference>
<dbReference type="CDD" id="cd24017">
    <property type="entry name" value="ASKHA_T2SSL_N"/>
    <property type="match status" value="1"/>
</dbReference>
<dbReference type="Gene3D" id="3.30.420.380">
    <property type="match status" value="1"/>
</dbReference>
<dbReference type="Gene3D" id="3.30.1360.100">
    <property type="entry name" value="General secretion pathway protein M, EpsM"/>
    <property type="match status" value="1"/>
</dbReference>
<dbReference type="InterPro" id="IPR043129">
    <property type="entry name" value="ATPase_NBD"/>
</dbReference>
<dbReference type="InterPro" id="IPR024230">
    <property type="entry name" value="GspL_cyto_dom"/>
</dbReference>
<dbReference type="InterPro" id="IPR025691">
    <property type="entry name" value="GspL_pp_dom"/>
</dbReference>
<dbReference type="InterPro" id="IPR007812">
    <property type="entry name" value="T2SS_protein-GspL"/>
</dbReference>
<dbReference type="NCBIfam" id="TIGR01709">
    <property type="entry name" value="typeII_sec_gspL"/>
    <property type="match status" value="1"/>
</dbReference>
<dbReference type="Pfam" id="PF12693">
    <property type="entry name" value="GspL_C"/>
    <property type="match status" value="1"/>
</dbReference>
<dbReference type="Pfam" id="PF05134">
    <property type="entry name" value="T2SSL"/>
    <property type="match status" value="1"/>
</dbReference>
<dbReference type="PIRSF" id="PIRSF015761">
    <property type="entry name" value="Protein_L"/>
    <property type="match status" value="1"/>
</dbReference>
<dbReference type="SUPFAM" id="SSF53067">
    <property type="entry name" value="Actin-like ATPase domain"/>
    <property type="match status" value="1"/>
</dbReference>
<comment type="function">
    <text evidence="2 4 7">Inner membrane component of the type II secretion system required for the energy-dependent secretion of extracellular factors such as proteases and toxins from the periplasm. Plays a role in the complex assembly and recruits XcpZ resulting in a stable complex in the inner membrane. Provides thus a link between the energy-providing XcpR protein in the cytoplasm and the rest of the T2SS machinery.</text>
</comment>
<comment type="subunit">
    <text evidence="1 2 3 4 5 7">Type II secretion system is composed of four main components: the outer membrane complex, the inner membrane complex, the cytoplasmic secretion ATPase and the periplasm-spanning pseudopilus (By similarity). Forms homodimers (PubMed:30425318). Interacts with XcpZ/GspM (PubMed:11872731, PubMed:16168578, PubMed:30337370, PubMed:9884230). Interacts with XcpR/GspE and XcpS/GspF (PubMed:16168578).</text>
</comment>
<comment type="subcellular location">
    <subcellularLocation>
        <location evidence="6">Cell inner membrane</location>
        <topology evidence="6">Single-pass membrane protein</topology>
    </subcellularLocation>
</comment>
<comment type="disruption phenotype">
    <text evidence="7">Absence of XcpY results in decreased amount of XcpZ in type II secretion system complexes.</text>
</comment>
<comment type="similarity">
    <text evidence="8">Belongs to the GSP L family.</text>
</comment>
<name>GSPL_PSEAE</name>
<keyword id="KW-0002">3D-structure</keyword>
<keyword id="KW-0997">Cell inner membrane</keyword>
<keyword id="KW-1003">Cell membrane</keyword>
<keyword id="KW-0472">Membrane</keyword>
<keyword id="KW-0653">Protein transport</keyword>
<keyword id="KW-1185">Reference proteome</keyword>
<keyword id="KW-0812">Transmembrane</keyword>
<keyword id="KW-1133">Transmembrane helix</keyword>
<keyword id="KW-0813">Transport</keyword>